<proteinExistence type="inferred from homology"/>
<protein>
    <recommendedName>
        <fullName evidence="1">Innexin inx4</fullName>
    </recommendedName>
    <alternativeName>
        <fullName evidence="9">Innexin</fullName>
    </alternativeName>
    <alternativeName>
        <fullName evidence="10 11">Zero population growth</fullName>
    </alternativeName>
</protein>
<comment type="function">
    <text evidence="1 6 7 8">Structural component of gap junctions (By similarity). Required for normal development of ovary (PubMed:21738713, PubMed:30929905). Required for normal egg production after blood meal (PubMed:30929905). Required for normal development of testis (PubMed:21738713, PubMed:21825136).</text>
</comment>
<comment type="function">
    <text evidence="8">(Microbial infection) Modulates the development of Plasmodium falciparum oocysts.</text>
</comment>
<comment type="subcellular location">
    <subcellularLocation>
        <location evidence="1">Cell membrane</location>
        <topology evidence="2">Multi-pass membrane protein</topology>
    </subcellularLocation>
    <subcellularLocation>
        <location evidence="1">Cell junction</location>
        <location evidence="1">Gap junction</location>
    </subcellularLocation>
</comment>
<comment type="disruption phenotype">
    <text evidence="6 7">RNAi-mediated knockdown results in a severe impairment of ovary development (PubMed:21738713). Impairment of testis development (PubMed:21738713, PubMed:21825136). Absence of sperm cells in male gonads (PubMed:21825136). No significant effects on functionality of male accessory gland (PubMed:21825136).</text>
</comment>
<comment type="similarity">
    <text evidence="3 4">Belongs to the pannexin family.</text>
</comment>
<gene>
    <name evidence="10 11" type="primary">ZPG</name>
    <name evidence="13" type="ORF">AgaP_AGAP006241</name>
</gene>
<reference evidence="14" key="1">
    <citation type="journal article" date="2002" name="Science">
        <title>The genome sequence of the malaria mosquito Anopheles gambiae.</title>
        <authorList>
            <person name="Holt R.A."/>
            <person name="Subramanian G.M."/>
            <person name="Halpern A."/>
            <person name="Sutton G.G."/>
            <person name="Charlab R."/>
            <person name="Nusskern D.R."/>
            <person name="Wincker P."/>
            <person name="Clark A.G."/>
            <person name="Ribeiro J.M.C."/>
            <person name="Wides R."/>
            <person name="Salzberg S.L."/>
            <person name="Loftus B.J."/>
            <person name="Yandell M.D."/>
            <person name="Majoros W.H."/>
            <person name="Rusch D.B."/>
            <person name="Lai Z."/>
            <person name="Kraft C.L."/>
            <person name="Abril J.F."/>
            <person name="Anthouard V."/>
            <person name="Arensburger P."/>
            <person name="Atkinson P.W."/>
            <person name="Baden H."/>
            <person name="de Berardinis V."/>
            <person name="Baldwin D."/>
            <person name="Benes V."/>
            <person name="Biedler J."/>
            <person name="Blass C."/>
            <person name="Bolanos R."/>
            <person name="Boscus D."/>
            <person name="Barnstead M."/>
            <person name="Cai S."/>
            <person name="Center A."/>
            <person name="Chaturverdi K."/>
            <person name="Christophides G.K."/>
            <person name="Chrystal M.A.M."/>
            <person name="Clamp M."/>
            <person name="Cravchik A."/>
            <person name="Curwen V."/>
            <person name="Dana A."/>
            <person name="Delcher A."/>
            <person name="Dew I."/>
            <person name="Evans C.A."/>
            <person name="Flanigan M."/>
            <person name="Grundschober-Freimoser A."/>
            <person name="Friedli L."/>
            <person name="Gu Z."/>
            <person name="Guan P."/>
            <person name="Guigo R."/>
            <person name="Hillenmeyer M.E."/>
            <person name="Hladun S.L."/>
            <person name="Hogan J.R."/>
            <person name="Hong Y.S."/>
            <person name="Hoover J."/>
            <person name="Jaillon O."/>
            <person name="Ke Z."/>
            <person name="Kodira C.D."/>
            <person name="Kokoza E."/>
            <person name="Koutsos A."/>
            <person name="Letunic I."/>
            <person name="Levitsky A.A."/>
            <person name="Liang Y."/>
            <person name="Lin J.-J."/>
            <person name="Lobo N.F."/>
            <person name="Lopez J.R."/>
            <person name="Malek J.A."/>
            <person name="McIntosh T.C."/>
            <person name="Meister S."/>
            <person name="Miller J.R."/>
            <person name="Mobarry C."/>
            <person name="Mongin E."/>
            <person name="Murphy S.D."/>
            <person name="O'Brochta D.A."/>
            <person name="Pfannkoch C."/>
            <person name="Qi R."/>
            <person name="Regier M.A."/>
            <person name="Remington K."/>
            <person name="Shao H."/>
            <person name="Sharakhova M.V."/>
            <person name="Sitter C.D."/>
            <person name="Shetty J."/>
            <person name="Smith T.J."/>
            <person name="Strong R."/>
            <person name="Sun J."/>
            <person name="Thomasova D."/>
            <person name="Ton L.Q."/>
            <person name="Topalis P."/>
            <person name="Tu Z.J."/>
            <person name="Unger M.F."/>
            <person name="Walenz B."/>
            <person name="Wang A.H."/>
            <person name="Wang J."/>
            <person name="Wang M."/>
            <person name="Wang X."/>
            <person name="Woodford K.J."/>
            <person name="Wortman J.R."/>
            <person name="Wu M."/>
            <person name="Yao A."/>
            <person name="Zdobnov E.M."/>
            <person name="Zhang H."/>
            <person name="Zhao Q."/>
            <person name="Zhao S."/>
            <person name="Zhu S.C."/>
            <person name="Zhimulev I."/>
            <person name="Coluzzi M."/>
            <person name="della Torre A."/>
            <person name="Roth C.W."/>
            <person name="Louis C."/>
            <person name="Kalush F."/>
            <person name="Mural R.J."/>
            <person name="Myers E.W."/>
            <person name="Adams M.D."/>
            <person name="Smith H.O."/>
            <person name="Broder S."/>
            <person name="Gardner M.J."/>
            <person name="Fraser C.M."/>
            <person name="Birney E."/>
            <person name="Bork P."/>
            <person name="Brey P.T."/>
            <person name="Venter J.C."/>
            <person name="Weissenbach J."/>
            <person name="Kafatos F.C."/>
            <person name="Collins F.H."/>
            <person name="Hoffman S.L."/>
        </authorList>
    </citation>
    <scope>NUCLEOTIDE SEQUENCE [LARGE SCALE GENOMIC DNA]</scope>
    <source>
        <strain evidence="14">PEST</strain>
    </source>
</reference>
<reference evidence="13" key="2">
    <citation type="journal article" date="2007" name="Genome Biol.">
        <title>Update of the Anopheles gambiae PEST genome assembly.</title>
        <authorList>
            <person name="Sharakhova M.V."/>
            <person name="Hammond M.P."/>
            <person name="Lobo N.F."/>
            <person name="Krzywinski J."/>
            <person name="Unger M.F."/>
            <person name="Hillenmeyer M.E."/>
            <person name="Bruggner R.V."/>
            <person name="Birney E."/>
            <person name="Collins F.H."/>
        </authorList>
    </citation>
    <scope>NUCLEOTIDE SEQUENCE [LARGE SCALE GENOMIC DNA]</scope>
    <source>
        <strain evidence="13">PEST</strain>
    </source>
</reference>
<reference evidence="12" key="3">
    <citation type="journal article" date="2011" name="PLoS ONE">
        <title>Transcription regulation of sex-biased genes during ontogeny in the malaria vector Anopheles gambiae.</title>
        <authorList>
            <person name="Magnusson K."/>
            <person name="Mendes A.M."/>
            <person name="Windbichler N."/>
            <person name="Papathanos P.A."/>
            <person name="Nolan T."/>
            <person name="Dottorini T."/>
            <person name="Rizzi E."/>
            <person name="Christophides G.K."/>
            <person name="Crisanti A."/>
        </authorList>
    </citation>
    <scope>FUNCTION</scope>
    <scope>DISRUPTION PHENOTYPE</scope>
</reference>
<reference evidence="12" key="4">
    <citation type="journal article" date="2011" name="Proc. Natl. Acad. Sci. U.S.A.">
        <title>Spermless males elicit large-scale female responses to mating in the malaria mosquito Anopheles gambiae.</title>
        <authorList>
            <person name="Thailayil J."/>
            <person name="Magnusson K."/>
            <person name="Godfray H.C."/>
            <person name="Crisanti A."/>
            <person name="Catteruccia F."/>
        </authorList>
    </citation>
    <scope>FUNCTION</scope>
    <scope>DISRUPTION PHENOTYPE</scope>
</reference>
<reference evidence="12" key="5">
    <citation type="journal article" date="2019" name="Cell">
        <title>Steroid Hormone Function Controls Non-competitive Plasmodium Development in Anopheles.</title>
        <authorList>
            <person name="Werling K."/>
            <person name="Shaw W.R."/>
            <person name="Itoe M.A."/>
            <person name="Westervelt K.A."/>
            <person name="Marcenac P."/>
            <person name="Paton D.G."/>
            <person name="Peng D."/>
            <person name="Singh N."/>
            <person name="Smidler A.L."/>
            <person name="South A."/>
            <person name="Deik A.A."/>
            <person name="Mancio-Silva L."/>
            <person name="Demas A.R."/>
            <person name="March S."/>
            <person name="Calvo E."/>
            <person name="Bhatia S.N."/>
            <person name="Clish C.B."/>
            <person name="Catteruccia F."/>
        </authorList>
    </citation>
    <scope>FUNCTION</scope>
    <scope>FUNCTION (MICROBIAL INFECTION)</scope>
</reference>
<evidence type="ECO:0000250" key="1">
    <source>
        <dbReference type="UniProtKB" id="Q9VRX6"/>
    </source>
</evidence>
<evidence type="ECO:0000255" key="2"/>
<evidence type="ECO:0000255" key="3">
    <source>
        <dbReference type="PROSITE-ProRule" id="PRU00351"/>
    </source>
</evidence>
<evidence type="ECO:0000255" key="4">
    <source>
        <dbReference type="RuleBase" id="RU010713"/>
    </source>
</evidence>
<evidence type="ECO:0000256" key="5">
    <source>
        <dbReference type="SAM" id="MobiDB-lite"/>
    </source>
</evidence>
<evidence type="ECO:0000269" key="6">
    <source>
    </source>
</evidence>
<evidence type="ECO:0000269" key="7">
    <source>
    </source>
</evidence>
<evidence type="ECO:0000269" key="8">
    <source>
    </source>
</evidence>
<evidence type="ECO:0000303" key="9">
    <source>
    </source>
</evidence>
<evidence type="ECO:0000303" key="10">
    <source>
    </source>
</evidence>
<evidence type="ECO:0000303" key="11">
    <source>
    </source>
</evidence>
<evidence type="ECO:0000305" key="12"/>
<evidence type="ECO:0000312" key="13">
    <source>
        <dbReference type="EMBL" id="EAA11594.3"/>
    </source>
</evidence>
<evidence type="ECO:0000312" key="14">
    <source>
        <dbReference type="Proteomes" id="UP000007062"/>
    </source>
</evidence>
<feature type="chain" id="PRO_0000460583" description="Innexin inx4" evidence="2">
    <location>
        <begin position="1"/>
        <end position="386"/>
    </location>
</feature>
<feature type="topological domain" description="Cytoplasmic" evidence="12">
    <location>
        <begin position="1"/>
        <end position="21"/>
    </location>
</feature>
<feature type="transmembrane region" description="Helical" evidence="3">
    <location>
        <begin position="22"/>
        <end position="42"/>
    </location>
</feature>
<feature type="topological domain" description="Extracellular" evidence="12">
    <location>
        <begin position="43"/>
        <end position="111"/>
    </location>
</feature>
<feature type="transmembrane region" description="Helical" evidence="3">
    <location>
        <begin position="112"/>
        <end position="132"/>
    </location>
</feature>
<feature type="topological domain" description="Cytoplasmic" evidence="12">
    <location>
        <begin position="133"/>
        <end position="187"/>
    </location>
</feature>
<feature type="transmembrane region" description="Helical" evidence="3">
    <location>
        <begin position="188"/>
        <end position="208"/>
    </location>
</feature>
<feature type="topological domain" description="Extracellular" evidence="12">
    <location>
        <begin position="209"/>
        <end position="272"/>
    </location>
</feature>
<feature type="transmembrane region" description="Helical" evidence="3">
    <location>
        <begin position="273"/>
        <end position="293"/>
    </location>
</feature>
<feature type="topological domain" description="Cytoplasmic" evidence="12">
    <location>
        <begin position="294"/>
        <end position="386"/>
    </location>
</feature>
<feature type="region of interest" description="Disordered" evidence="5">
    <location>
        <begin position="358"/>
        <end position="386"/>
    </location>
</feature>
<feature type="compositionally biased region" description="Acidic residues" evidence="5">
    <location>
        <begin position="374"/>
        <end position="386"/>
    </location>
</feature>
<dbReference type="EMBL" id="AAAB01008960">
    <property type="protein sequence ID" value="EAA11594.3"/>
    <property type="molecule type" value="Genomic_DNA"/>
</dbReference>
<dbReference type="RefSeq" id="XP_316309.3">
    <property type="nucleotide sequence ID" value="XM_316309.3"/>
</dbReference>
<dbReference type="SMR" id="Q7Q5R9"/>
<dbReference type="FunCoup" id="Q7Q5R9">
    <property type="interactions" value="9"/>
</dbReference>
<dbReference type="STRING" id="7165.Q7Q5R9"/>
<dbReference type="PaxDb" id="7165-AGAP006241-PA"/>
<dbReference type="EnsemblMetazoa" id="AGAP006241-RA">
    <property type="protein sequence ID" value="AGAP006241-PA"/>
    <property type="gene ID" value="AGAP006241"/>
</dbReference>
<dbReference type="GeneID" id="1276902"/>
<dbReference type="KEGG" id="aga:1276902"/>
<dbReference type="VEuPathDB" id="VectorBase:AGAMI1_000906"/>
<dbReference type="VEuPathDB" id="VectorBase:AGAP006241"/>
<dbReference type="eggNOG" id="ENOG502QR27">
    <property type="taxonomic scope" value="Eukaryota"/>
</dbReference>
<dbReference type="HOGENOM" id="CLU_035763_1_1_1"/>
<dbReference type="InParanoid" id="Q7Q5R9"/>
<dbReference type="OMA" id="NFWLMDV"/>
<dbReference type="Proteomes" id="UP000007062">
    <property type="component" value="Chromosome 2L"/>
</dbReference>
<dbReference type="GO" id="GO:0005921">
    <property type="term" value="C:gap junction"/>
    <property type="evidence" value="ECO:0000318"/>
    <property type="project" value="GO_Central"/>
</dbReference>
<dbReference type="GO" id="GO:0005886">
    <property type="term" value="C:plasma membrane"/>
    <property type="evidence" value="ECO:0000318"/>
    <property type="project" value="GO_Central"/>
</dbReference>
<dbReference type="GO" id="GO:0005243">
    <property type="term" value="F:gap junction channel activity"/>
    <property type="evidence" value="ECO:0000318"/>
    <property type="project" value="GO_Central"/>
</dbReference>
<dbReference type="GO" id="GO:0034220">
    <property type="term" value="P:monoatomic ion transmembrane transport"/>
    <property type="evidence" value="ECO:0007669"/>
    <property type="project" value="UniProtKB-KW"/>
</dbReference>
<dbReference type="GO" id="GO:0007602">
    <property type="term" value="P:phototransduction"/>
    <property type="evidence" value="ECO:0000318"/>
    <property type="project" value="GO_Central"/>
</dbReference>
<dbReference type="InterPro" id="IPR000990">
    <property type="entry name" value="Innexin"/>
</dbReference>
<dbReference type="PANTHER" id="PTHR11893">
    <property type="entry name" value="INNEXIN"/>
    <property type="match status" value="1"/>
</dbReference>
<dbReference type="PANTHER" id="PTHR11893:SF43">
    <property type="entry name" value="INNEXIN INX4-RELATED"/>
    <property type="match status" value="1"/>
</dbReference>
<dbReference type="Pfam" id="PF00876">
    <property type="entry name" value="Innexin"/>
    <property type="match status" value="1"/>
</dbReference>
<dbReference type="PRINTS" id="PR01262">
    <property type="entry name" value="INNEXIN"/>
</dbReference>
<dbReference type="PROSITE" id="PS51013">
    <property type="entry name" value="PANNEXIN"/>
    <property type="match status" value="1"/>
</dbReference>
<name>INX4_ANOGA</name>
<accession>Q7Q5R9</accession>
<keyword id="KW-0965">Cell junction</keyword>
<keyword id="KW-1003">Cell membrane</keyword>
<keyword id="KW-0303">Gap junction</keyword>
<keyword id="KW-0407">Ion channel</keyword>
<keyword id="KW-0406">Ion transport</keyword>
<keyword id="KW-0472">Membrane</keyword>
<keyword id="KW-1185">Reference proteome</keyword>
<keyword id="KW-0812">Transmembrane</keyword>
<keyword id="KW-1133">Transmembrane helix</keyword>
<keyword id="KW-0813">Transport</keyword>
<organism evidence="13">
    <name type="scientific">Anopheles gambiae</name>
    <name type="common">African malaria mosquito</name>
    <dbReference type="NCBI Taxonomy" id="7165"/>
    <lineage>
        <taxon>Eukaryota</taxon>
        <taxon>Metazoa</taxon>
        <taxon>Ecdysozoa</taxon>
        <taxon>Arthropoda</taxon>
        <taxon>Hexapoda</taxon>
        <taxon>Insecta</taxon>
        <taxon>Pterygota</taxon>
        <taxon>Neoptera</taxon>
        <taxon>Endopterygota</taxon>
        <taxon>Diptera</taxon>
        <taxon>Nematocera</taxon>
        <taxon>Culicoidea</taxon>
        <taxon>Culicidae</taxon>
        <taxon>Anophelinae</taxon>
        <taxon>Anopheles</taxon>
    </lineage>
</organism>
<sequence length="386" mass="44419">MLEFVRPLQSILQIKQVNSTDLVWRLHCRVTVFLLLLASLLLSARQYFGNPIDCVIGSGTVSSSTMNEFCWIMGTYISNDPNFVLDSTDLVKINAKIGHIPESERSYQKYYQWVVFILALQACMFSVPNFLWKAWEAGRLQSLCDGLTTPIVPDHWEKTRKKQLITYLSADFPRLHRTYLLRYCFCTLLNFCNVLLNIFLVNVIFSGFWSNYHPAVKALLSFDFPSWNRYNSQVFPKIAKCDFHFVGPSGSKQNRDGLCLLPLNVVNEKIFAFIWLWFLGLLVISMLNLLFWIVVLCSKGFRLWLLTAPLYPIRTSYVARALDGQGVGQWFLLYQLCRNLNPIVGRELVQSVSKAKGHNGHKTFRMPKGGEPDFYTDPEGYDEEGV</sequence>